<dbReference type="EC" id="5.4.2.11" evidence="6"/>
<dbReference type="EC" id="5.4.2.4" evidence="6"/>
<dbReference type="EMBL" id="J04173">
    <property type="protein sequence ID" value="AAA60071.1"/>
    <property type="molecule type" value="mRNA"/>
</dbReference>
<dbReference type="EMBL" id="AY007118">
    <property type="protein sequence ID" value="AAG01990.1"/>
    <property type="molecule type" value="mRNA"/>
</dbReference>
<dbReference type="EMBL" id="BC010038">
    <property type="protein sequence ID" value="AAH10038.1"/>
    <property type="molecule type" value="mRNA"/>
</dbReference>
<dbReference type="EMBL" id="BC011678">
    <property type="protein sequence ID" value="AAH11678.1"/>
    <property type="molecule type" value="mRNA"/>
</dbReference>
<dbReference type="EMBL" id="BC053356">
    <property type="protein sequence ID" value="AAH53356.1"/>
    <property type="molecule type" value="mRNA"/>
</dbReference>
<dbReference type="EMBL" id="BC066959">
    <property type="protein sequence ID" value="AAH66959.1"/>
    <property type="molecule type" value="mRNA"/>
</dbReference>
<dbReference type="EMBL" id="BC073742">
    <property type="protein sequence ID" value="AAH73742.1"/>
    <property type="molecule type" value="mRNA"/>
</dbReference>
<dbReference type="CCDS" id="CCDS7458.1"/>
<dbReference type="PIR" id="A31782">
    <property type="entry name" value="PMHUYB"/>
</dbReference>
<dbReference type="RefSeq" id="NP_002620.1">
    <property type="nucleotide sequence ID" value="NM_002629.4"/>
</dbReference>
<dbReference type="PDB" id="1YFK">
    <property type="method" value="X-ray"/>
    <property type="resolution" value="2.70 A"/>
    <property type="chains" value="A/B=1-254"/>
</dbReference>
<dbReference type="PDB" id="1YJX">
    <property type="method" value="X-ray"/>
    <property type="resolution" value="2.80 A"/>
    <property type="chains" value="A/B/C/D/E/F/G/H/I/J/K/L=1-254"/>
</dbReference>
<dbReference type="PDB" id="4GPI">
    <property type="method" value="X-ray"/>
    <property type="resolution" value="2.08 A"/>
    <property type="chains" value="B/C=1-254"/>
</dbReference>
<dbReference type="PDB" id="4GPZ">
    <property type="method" value="X-ray"/>
    <property type="resolution" value="1.65 A"/>
    <property type="chains" value="A/B=1-254"/>
</dbReference>
<dbReference type="PDB" id="5Y2I">
    <property type="method" value="X-ray"/>
    <property type="resolution" value="1.92 A"/>
    <property type="chains" value="B/C=1-254"/>
</dbReference>
<dbReference type="PDB" id="5Y2U">
    <property type="method" value="X-ray"/>
    <property type="resolution" value="1.98 A"/>
    <property type="chains" value="B/C=1-254"/>
</dbReference>
<dbReference type="PDB" id="5Y35">
    <property type="method" value="X-ray"/>
    <property type="resolution" value="1.99 A"/>
    <property type="chains" value="B/C=1-254"/>
</dbReference>
<dbReference type="PDB" id="5Y64">
    <property type="method" value="X-ray"/>
    <property type="resolution" value="2.15 A"/>
    <property type="chains" value="B/C=1-254"/>
</dbReference>
<dbReference type="PDB" id="5Y65">
    <property type="method" value="X-ray"/>
    <property type="resolution" value="2.55 A"/>
    <property type="chains" value="B/C=1-254"/>
</dbReference>
<dbReference type="PDB" id="5ZRM">
    <property type="method" value="X-ray"/>
    <property type="resolution" value="2.28 A"/>
    <property type="chains" value="B/C=2-235"/>
</dbReference>
<dbReference type="PDB" id="5ZS8">
    <property type="method" value="X-ray"/>
    <property type="resolution" value="2.20 A"/>
    <property type="chains" value="B=2-235, C=2-241"/>
</dbReference>
<dbReference type="PDB" id="6ISN">
    <property type="method" value="X-ray"/>
    <property type="resolution" value="1.98 A"/>
    <property type="chains" value="B/C=2-235"/>
</dbReference>
<dbReference type="PDB" id="7XB7">
    <property type="method" value="X-ray"/>
    <property type="resolution" value="2.20 A"/>
    <property type="chains" value="B/C=1-254"/>
</dbReference>
<dbReference type="PDB" id="7XB8">
    <property type="method" value="X-ray"/>
    <property type="resolution" value="1.60 A"/>
    <property type="chains" value="B/C=1-254"/>
</dbReference>
<dbReference type="PDB" id="7XB9">
    <property type="method" value="X-ray"/>
    <property type="resolution" value="1.58 A"/>
    <property type="chains" value="B/C=1-254"/>
</dbReference>
<dbReference type="PDB" id="8IT4">
    <property type="method" value="X-ray"/>
    <property type="resolution" value="2.40 A"/>
    <property type="chains" value="A/B=1-254"/>
</dbReference>
<dbReference type="PDB" id="8IT5">
    <property type="method" value="X-ray"/>
    <property type="resolution" value="2.20 A"/>
    <property type="chains" value="B/C=1-254"/>
</dbReference>
<dbReference type="PDB" id="8IT6">
    <property type="method" value="X-ray"/>
    <property type="resolution" value="2.55 A"/>
    <property type="chains" value="B/C=1-254"/>
</dbReference>
<dbReference type="PDB" id="8IT7">
    <property type="method" value="X-ray"/>
    <property type="resolution" value="2.80 A"/>
    <property type="chains" value="B/C=1-254"/>
</dbReference>
<dbReference type="PDB" id="8IT8">
    <property type="method" value="X-ray"/>
    <property type="resolution" value="1.95 A"/>
    <property type="chains" value="B/C=1-254"/>
</dbReference>
<dbReference type="PDB" id="8ITB">
    <property type="method" value="X-ray"/>
    <property type="resolution" value="2.38 A"/>
    <property type="chains" value="B/C=1-254"/>
</dbReference>
<dbReference type="PDB" id="8ITC">
    <property type="method" value="X-ray"/>
    <property type="resolution" value="1.88 A"/>
    <property type="chains" value="B/C=1-254"/>
</dbReference>
<dbReference type="PDB" id="8ITD">
    <property type="method" value="X-ray"/>
    <property type="resolution" value="1.90 A"/>
    <property type="chains" value="B/C=1-254"/>
</dbReference>
<dbReference type="PDBsum" id="1YFK"/>
<dbReference type="PDBsum" id="1YJX"/>
<dbReference type="PDBsum" id="4GPI"/>
<dbReference type="PDBsum" id="4GPZ"/>
<dbReference type="PDBsum" id="5Y2I"/>
<dbReference type="PDBsum" id="5Y2U"/>
<dbReference type="PDBsum" id="5Y35"/>
<dbReference type="PDBsum" id="5Y64"/>
<dbReference type="PDBsum" id="5Y65"/>
<dbReference type="PDBsum" id="5ZRM"/>
<dbReference type="PDBsum" id="5ZS8"/>
<dbReference type="PDBsum" id="6ISN"/>
<dbReference type="PDBsum" id="7XB7"/>
<dbReference type="PDBsum" id="7XB8"/>
<dbReference type="PDBsum" id="7XB9"/>
<dbReference type="PDBsum" id="8IT4"/>
<dbReference type="PDBsum" id="8IT5"/>
<dbReference type="PDBsum" id="8IT6"/>
<dbReference type="PDBsum" id="8IT7"/>
<dbReference type="PDBsum" id="8IT8"/>
<dbReference type="PDBsum" id="8ITB"/>
<dbReference type="PDBsum" id="8ITC"/>
<dbReference type="PDBsum" id="8ITD"/>
<dbReference type="SMR" id="P18669"/>
<dbReference type="BioGRID" id="111244">
    <property type="interactions" value="197"/>
</dbReference>
<dbReference type="FunCoup" id="P18669">
    <property type="interactions" value="1447"/>
</dbReference>
<dbReference type="IntAct" id="P18669">
    <property type="interactions" value="45"/>
</dbReference>
<dbReference type="MINT" id="P18669"/>
<dbReference type="STRING" id="9606.ENSP00000359991"/>
<dbReference type="BindingDB" id="P18669"/>
<dbReference type="ChEMBL" id="CHEMBL3334418"/>
<dbReference type="DrugBank" id="DB11638">
    <property type="generic name" value="Artenimol"/>
</dbReference>
<dbReference type="DrugBank" id="DB09130">
    <property type="generic name" value="Copper"/>
</dbReference>
<dbReference type="DEPOD" id="PGAM1"/>
<dbReference type="GlyGen" id="P18669">
    <property type="glycosylation" value="2 sites, 1 O-linked glycan (2 sites)"/>
</dbReference>
<dbReference type="iPTMnet" id="P18669"/>
<dbReference type="MetOSite" id="P18669"/>
<dbReference type="PhosphoSitePlus" id="P18669"/>
<dbReference type="SwissPalm" id="P18669"/>
<dbReference type="BioMuta" id="PGAM1"/>
<dbReference type="DMDM" id="130348"/>
<dbReference type="OGP" id="P18669"/>
<dbReference type="CPTAC" id="CPTAC-2762"/>
<dbReference type="jPOST" id="P18669"/>
<dbReference type="MassIVE" id="P18669"/>
<dbReference type="PaxDb" id="9606-ENSP00000359991"/>
<dbReference type="PeptideAtlas" id="P18669"/>
<dbReference type="PRIDE" id="P18669"/>
<dbReference type="ProteomicsDB" id="53605"/>
<dbReference type="Pumba" id="P18669"/>
<dbReference type="TopDownProteomics" id="P18669"/>
<dbReference type="Antibodypedia" id="30878">
    <property type="antibodies" value="300 antibodies from 35 providers"/>
</dbReference>
<dbReference type="DNASU" id="5223"/>
<dbReference type="Ensembl" id="ENST00000334828.6">
    <property type="protein sequence ID" value="ENSP00000359991.4"/>
    <property type="gene ID" value="ENSG00000171314.9"/>
</dbReference>
<dbReference type="GeneID" id="5223"/>
<dbReference type="KEGG" id="hsa:5223"/>
<dbReference type="MANE-Select" id="ENST00000334828.6">
    <property type="protein sequence ID" value="ENSP00000359991.4"/>
    <property type="RefSeq nucleotide sequence ID" value="NM_002629.4"/>
    <property type="RefSeq protein sequence ID" value="NP_002620.1"/>
</dbReference>
<dbReference type="AGR" id="HGNC:8888"/>
<dbReference type="CTD" id="5223"/>
<dbReference type="DisGeNET" id="5223"/>
<dbReference type="GeneCards" id="PGAM1"/>
<dbReference type="HGNC" id="HGNC:8888">
    <property type="gene designation" value="PGAM1"/>
</dbReference>
<dbReference type="HPA" id="ENSG00000171314">
    <property type="expression patterns" value="Low tissue specificity"/>
</dbReference>
<dbReference type="MalaCards" id="PGAM1"/>
<dbReference type="MIM" id="172250">
    <property type="type" value="gene"/>
</dbReference>
<dbReference type="neXtProt" id="NX_P18669"/>
<dbReference type="OpenTargets" id="ENSG00000171314"/>
<dbReference type="PharmGKB" id="PA33225"/>
<dbReference type="VEuPathDB" id="HostDB:ENSG00000171314"/>
<dbReference type="eggNOG" id="KOG0235">
    <property type="taxonomic scope" value="Eukaryota"/>
</dbReference>
<dbReference type="GeneTree" id="ENSGT00950000182926"/>
<dbReference type="HOGENOM" id="CLU_033323_1_1_1"/>
<dbReference type="InParanoid" id="P18669"/>
<dbReference type="OMA" id="MLPYWYD"/>
<dbReference type="OrthoDB" id="354304at2759"/>
<dbReference type="PAN-GO" id="P18669">
    <property type="GO annotations" value="0 GO annotations based on evolutionary models"/>
</dbReference>
<dbReference type="PhylomeDB" id="P18669"/>
<dbReference type="TreeFam" id="TF300007"/>
<dbReference type="BioCyc" id="MetaCyc:HS10286-MONOMER"/>
<dbReference type="BRENDA" id="5.4.2.11">
    <property type="organism ID" value="2681"/>
</dbReference>
<dbReference type="PathwayCommons" id="P18669"/>
<dbReference type="Reactome" id="R-HSA-6798695">
    <property type="pathway name" value="Neutrophil degranulation"/>
</dbReference>
<dbReference type="Reactome" id="R-HSA-70171">
    <property type="pathway name" value="Glycolysis"/>
</dbReference>
<dbReference type="Reactome" id="R-HSA-70263">
    <property type="pathway name" value="Gluconeogenesis"/>
</dbReference>
<dbReference type="SABIO-RK" id="P18669"/>
<dbReference type="SignaLink" id="P18669"/>
<dbReference type="SIGNOR" id="P18669"/>
<dbReference type="BioGRID-ORCS" id="5223">
    <property type="hits" value="577 hits in 1085 CRISPR screens"/>
</dbReference>
<dbReference type="ChiTaRS" id="PGAM1">
    <property type="organism name" value="human"/>
</dbReference>
<dbReference type="EvolutionaryTrace" id="P18669"/>
<dbReference type="GenomeRNAi" id="5223"/>
<dbReference type="Pharos" id="P18669">
    <property type="development level" value="Tchem"/>
</dbReference>
<dbReference type="PRO" id="PR:P18669"/>
<dbReference type="Proteomes" id="UP000005640">
    <property type="component" value="Chromosome 10"/>
</dbReference>
<dbReference type="RNAct" id="P18669">
    <property type="molecule type" value="protein"/>
</dbReference>
<dbReference type="Bgee" id="ENSG00000171314">
    <property type="expression patterns" value="Expressed in superior frontal gyrus and 98 other cell types or tissues"/>
</dbReference>
<dbReference type="ExpressionAtlas" id="P18669">
    <property type="expression patterns" value="baseline and differential"/>
</dbReference>
<dbReference type="GO" id="GO:0005737">
    <property type="term" value="C:cytoplasm"/>
    <property type="evidence" value="ECO:0000314"/>
    <property type="project" value="UniProtKB"/>
</dbReference>
<dbReference type="GO" id="GO:0005829">
    <property type="term" value="C:cytosol"/>
    <property type="evidence" value="ECO:0000314"/>
    <property type="project" value="UniProtKB"/>
</dbReference>
<dbReference type="GO" id="GO:0070062">
    <property type="term" value="C:extracellular exosome"/>
    <property type="evidence" value="ECO:0007005"/>
    <property type="project" value="UniProtKB"/>
</dbReference>
<dbReference type="GO" id="GO:0005576">
    <property type="term" value="C:extracellular region"/>
    <property type="evidence" value="ECO:0000304"/>
    <property type="project" value="Reactome"/>
</dbReference>
<dbReference type="GO" id="GO:1904813">
    <property type="term" value="C:ficolin-1-rich granule lumen"/>
    <property type="evidence" value="ECO:0000304"/>
    <property type="project" value="Reactome"/>
</dbReference>
<dbReference type="GO" id="GO:0016020">
    <property type="term" value="C:membrane"/>
    <property type="evidence" value="ECO:0007005"/>
    <property type="project" value="UniProtKB"/>
</dbReference>
<dbReference type="GO" id="GO:0034774">
    <property type="term" value="C:secretory granule lumen"/>
    <property type="evidence" value="ECO:0000304"/>
    <property type="project" value="Reactome"/>
</dbReference>
<dbReference type="GO" id="GO:0004082">
    <property type="term" value="F:bisphosphoglycerate mutase activity"/>
    <property type="evidence" value="ECO:0000314"/>
    <property type="project" value="UniProtKB"/>
</dbReference>
<dbReference type="GO" id="GO:0016787">
    <property type="term" value="F:hydrolase activity"/>
    <property type="evidence" value="ECO:0007669"/>
    <property type="project" value="UniProtKB-KW"/>
</dbReference>
<dbReference type="GO" id="GO:0004619">
    <property type="term" value="F:phosphoglycerate mutase activity"/>
    <property type="evidence" value="ECO:0000314"/>
    <property type="project" value="UniProtKB"/>
</dbReference>
<dbReference type="GO" id="GO:0019901">
    <property type="term" value="F:protein kinase binding"/>
    <property type="evidence" value="ECO:0000353"/>
    <property type="project" value="UniProtKB"/>
</dbReference>
<dbReference type="GO" id="GO:0061621">
    <property type="term" value="P:canonical glycolysis"/>
    <property type="evidence" value="ECO:0000314"/>
    <property type="project" value="UniProtKB"/>
</dbReference>
<dbReference type="GO" id="GO:0006094">
    <property type="term" value="P:gluconeogenesis"/>
    <property type="evidence" value="ECO:0000304"/>
    <property type="project" value="Reactome"/>
</dbReference>
<dbReference type="CDD" id="cd07067">
    <property type="entry name" value="HP_PGM_like"/>
    <property type="match status" value="1"/>
</dbReference>
<dbReference type="FunFam" id="3.40.50.1240:FF:000007">
    <property type="entry name" value="Phosphoglycerate mutase"/>
    <property type="match status" value="1"/>
</dbReference>
<dbReference type="Gene3D" id="3.40.50.1240">
    <property type="entry name" value="Phosphoglycerate mutase-like"/>
    <property type="match status" value="1"/>
</dbReference>
<dbReference type="HAMAP" id="MF_01039">
    <property type="entry name" value="PGAM_GpmA"/>
    <property type="match status" value="1"/>
</dbReference>
<dbReference type="InterPro" id="IPR013078">
    <property type="entry name" value="His_Pase_superF_clade-1"/>
</dbReference>
<dbReference type="InterPro" id="IPR029033">
    <property type="entry name" value="His_PPase_superfam"/>
</dbReference>
<dbReference type="InterPro" id="IPR001345">
    <property type="entry name" value="PG/BPGM_mutase_AS"/>
</dbReference>
<dbReference type="InterPro" id="IPR005952">
    <property type="entry name" value="Phosphogly_mut1"/>
</dbReference>
<dbReference type="NCBIfam" id="TIGR01258">
    <property type="entry name" value="pgm_1"/>
    <property type="match status" value="1"/>
</dbReference>
<dbReference type="NCBIfam" id="NF010713">
    <property type="entry name" value="PRK14115.1"/>
    <property type="match status" value="1"/>
</dbReference>
<dbReference type="PANTHER" id="PTHR11931">
    <property type="entry name" value="PHOSPHOGLYCERATE MUTASE"/>
    <property type="match status" value="1"/>
</dbReference>
<dbReference type="Pfam" id="PF00300">
    <property type="entry name" value="His_Phos_1"/>
    <property type="match status" value="2"/>
</dbReference>
<dbReference type="PIRSF" id="PIRSF000709">
    <property type="entry name" value="6PFK_2-Ptase"/>
    <property type="match status" value="1"/>
</dbReference>
<dbReference type="SMART" id="SM00855">
    <property type="entry name" value="PGAM"/>
    <property type="match status" value="1"/>
</dbReference>
<dbReference type="SUPFAM" id="SSF53254">
    <property type="entry name" value="Phosphoglycerate mutase-like"/>
    <property type="match status" value="1"/>
</dbReference>
<dbReference type="PROSITE" id="PS00175">
    <property type="entry name" value="PG_MUTASE"/>
    <property type="match status" value="1"/>
</dbReference>
<feature type="initiator methionine" description="Removed" evidence="8">
    <location>
        <position position="1"/>
    </location>
</feature>
<feature type="chain" id="PRO_0000179825" description="Phosphoglycerate mutase 1">
    <location>
        <begin position="2"/>
        <end position="254"/>
    </location>
</feature>
<feature type="active site" description="Tele-phosphohistidine intermediate" evidence="6 10">
    <location>
        <position position="11"/>
    </location>
</feature>
<feature type="active site" description="Proton donor/acceptor" evidence="10">
    <location>
        <position position="89"/>
    </location>
</feature>
<feature type="binding site" evidence="4 6">
    <location>
        <begin position="10"/>
        <end position="17"/>
    </location>
    <ligand>
        <name>substrate</name>
    </ligand>
</feature>
<feature type="binding site" evidence="4 6">
    <location>
        <begin position="23"/>
        <end position="24"/>
    </location>
    <ligand>
        <name>substrate</name>
    </ligand>
</feature>
<feature type="binding site" evidence="2">
    <location>
        <position position="62"/>
    </location>
    <ligand>
        <name>substrate</name>
    </ligand>
</feature>
<feature type="binding site" evidence="4">
    <location>
        <begin position="89"/>
        <end position="92"/>
    </location>
    <ligand>
        <name>substrate</name>
    </ligand>
</feature>
<feature type="binding site" evidence="4 6">
    <location>
        <position position="100"/>
    </location>
    <ligand>
        <name>substrate</name>
    </ligand>
</feature>
<feature type="binding site" evidence="4">
    <location>
        <begin position="116"/>
        <end position="117"/>
    </location>
    <ligand>
        <name>substrate</name>
    </ligand>
</feature>
<feature type="binding site" evidence="2">
    <location>
        <begin position="187"/>
        <end position="188"/>
    </location>
    <ligand>
        <name>substrate</name>
    </ligand>
</feature>
<feature type="site" description="Transition state stabilizer" evidence="1">
    <location>
        <position position="186"/>
    </location>
</feature>
<feature type="modified residue" description="Phosphoserine" evidence="14 15 16 17 18">
    <location>
        <position position="14"/>
    </location>
</feature>
<feature type="modified residue" description="Phosphoserine" evidence="18">
    <location>
        <position position="23"/>
    </location>
</feature>
<feature type="modified residue" description="Phosphotyrosine" evidence="6">
    <location>
        <position position="26"/>
    </location>
</feature>
<feature type="modified residue" description="Phosphoserine" evidence="13 17">
    <location>
        <position position="31"/>
    </location>
</feature>
<feature type="modified residue" description="N6-acetyllysine" evidence="3">
    <location>
        <position position="106"/>
    </location>
</feature>
<feature type="modified residue" description="Phosphoserine" evidence="3">
    <location>
        <position position="118"/>
    </location>
</feature>
<feature type="modified residue" description="N6-acetyllysine; alternate" evidence="5">
    <location>
        <position position="251"/>
    </location>
</feature>
<feature type="modified residue" description="N6-succinyllysine; alternate" evidence="3">
    <location>
        <position position="251"/>
    </location>
</feature>
<feature type="modified residue" description="N6-acetyllysine" evidence="5">
    <location>
        <position position="253"/>
    </location>
</feature>
<feature type="modified residue" description="N6-acetyllysine" evidence="5">
    <location>
        <position position="254"/>
    </location>
</feature>
<feature type="strand" evidence="20">
    <location>
        <begin position="4"/>
        <end position="10"/>
    </location>
</feature>
<feature type="helix" evidence="20">
    <location>
        <begin position="17"/>
        <end position="19"/>
    </location>
</feature>
<feature type="helix" evidence="20">
    <location>
        <begin position="32"/>
        <end position="47"/>
    </location>
</feature>
<feature type="strand" evidence="20">
    <location>
        <begin position="53"/>
        <end position="57"/>
    </location>
</feature>
<feature type="helix" evidence="20">
    <location>
        <begin position="61"/>
        <end position="73"/>
    </location>
</feature>
<feature type="strand" evidence="20">
    <location>
        <begin position="81"/>
        <end position="83"/>
    </location>
</feature>
<feature type="helix" evidence="20">
    <location>
        <begin position="85"/>
        <end position="87"/>
    </location>
</feature>
<feature type="helix" evidence="20">
    <location>
        <begin position="93"/>
        <end position="95"/>
    </location>
</feature>
<feature type="helix" evidence="20">
    <location>
        <begin position="100"/>
        <end position="117"/>
    </location>
</feature>
<feature type="helix" evidence="20">
    <location>
        <begin position="133"/>
        <end position="137"/>
    </location>
</feature>
<feature type="helix" evidence="20">
    <location>
        <begin position="140"/>
        <end position="142"/>
    </location>
</feature>
<feature type="turn" evidence="20">
    <location>
        <begin position="147"/>
        <end position="149"/>
    </location>
</feature>
<feature type="helix" evidence="20">
    <location>
        <begin position="156"/>
        <end position="170"/>
    </location>
</feature>
<feature type="helix" evidence="20">
    <location>
        <begin position="172"/>
        <end position="176"/>
    </location>
</feature>
<feature type="strand" evidence="20">
    <location>
        <begin position="181"/>
        <end position="185"/>
    </location>
</feature>
<feature type="helix" evidence="20">
    <location>
        <begin position="187"/>
        <end position="198"/>
    </location>
</feature>
<feature type="helix" evidence="20">
    <location>
        <begin position="202"/>
        <end position="207"/>
    </location>
</feature>
<feature type="strand" evidence="19">
    <location>
        <begin position="212"/>
        <end position="214"/>
    </location>
</feature>
<feature type="strand" evidence="20">
    <location>
        <begin position="216"/>
        <end position="220"/>
    </location>
</feature>
<feature type="strand" evidence="20">
    <location>
        <begin position="226"/>
        <end position="228"/>
    </location>
</feature>
<feature type="helix" evidence="19">
    <location>
        <begin position="236"/>
        <end position="250"/>
    </location>
</feature>
<proteinExistence type="evidence at protein level"/>
<organism>
    <name type="scientific">Homo sapiens</name>
    <name type="common">Human</name>
    <dbReference type="NCBI Taxonomy" id="9606"/>
    <lineage>
        <taxon>Eukaryota</taxon>
        <taxon>Metazoa</taxon>
        <taxon>Chordata</taxon>
        <taxon>Craniata</taxon>
        <taxon>Vertebrata</taxon>
        <taxon>Euteleostomi</taxon>
        <taxon>Mammalia</taxon>
        <taxon>Eutheria</taxon>
        <taxon>Euarchontoglires</taxon>
        <taxon>Primates</taxon>
        <taxon>Haplorrhini</taxon>
        <taxon>Catarrhini</taxon>
        <taxon>Hominidae</taxon>
        <taxon>Homo</taxon>
    </lineage>
</organism>
<reference key="1">
    <citation type="journal article" date="1988" name="J. Biol. Chem.">
        <title>Isolation of a cDNA encoding the B isozyme of human phosphoglycerate mutase (PGAM) and characterization of the PGAM gene family.</title>
        <authorList>
            <person name="Sakoda S."/>
            <person name="Shanske S."/>
            <person name="Dimauro S."/>
            <person name="Schon E.A."/>
        </authorList>
    </citation>
    <scope>NUCLEOTIDE SEQUENCE [MRNA]</scope>
    <scope>TISSUE SPECIFICITY</scope>
</reference>
<reference key="2">
    <citation type="submission" date="2000-07" db="EMBL/GenBank/DDBJ databases">
        <title>Pediatric leukemia cDNA sequencing project.</title>
        <authorList>
            <person name="Zhou J."/>
            <person name="Yu W."/>
            <person name="Tang H."/>
            <person name="Mei G."/>
            <person name="Tsang Y.T.M."/>
            <person name="Bouck J."/>
            <person name="Gibbs R.A."/>
            <person name="Margolin J.F."/>
        </authorList>
    </citation>
    <scope>NUCLEOTIDE SEQUENCE [LARGE SCALE MRNA]</scope>
    <source>
        <tissue>Leukemia</tissue>
    </source>
</reference>
<reference key="3">
    <citation type="journal article" date="2004" name="Genome Res.">
        <title>The status, quality, and expansion of the NIH full-length cDNA project: the Mammalian Gene Collection (MGC).</title>
        <authorList>
            <consortium name="The MGC Project Team"/>
        </authorList>
    </citation>
    <scope>NUCLEOTIDE SEQUENCE [LARGE SCALE MRNA]</scope>
    <source>
        <tissue>Brain</tissue>
        <tissue>Liver</tissue>
        <tissue>Lymph</tissue>
        <tissue>Skin</tissue>
        <tissue>Uterus</tissue>
    </source>
</reference>
<reference key="4">
    <citation type="journal article" date="1988" name="J. Biol. Chem.">
        <title>Sequence of the human erythrocyte phosphoglycerate mutase by microsequencer and mass spectrometry.</title>
        <authorList>
            <person name="Blouquit Y."/>
            <person name="Calvin M.C."/>
            <person name="Rosa R."/>
            <person name="Prome D."/>
            <person name="Prome J.-C."/>
            <person name="Pratbernou F."/>
            <person name="Cohen-Solal M."/>
            <person name="Rosa J."/>
        </authorList>
    </citation>
    <scope>PROTEIN SEQUENCE OF 2-254</scope>
    <scope>CLEAVAGE OF INITIATOR METHIONINE</scope>
</reference>
<reference key="5">
    <citation type="submission" date="2008-12" db="UniProtKB">
        <authorList>
            <person name="Lubec G."/>
            <person name="Vishwanath V."/>
            <person name="Chen W.-Q."/>
            <person name="Sun Y."/>
        </authorList>
    </citation>
    <scope>PROTEIN SEQUENCE OF 11-39; 47-61; 91-100; 118-138; 142-157; 163-176; 181-191 AND 223-240</scope>
    <scope>IDENTIFICATION BY MASS SPECTROMETRY</scope>
    <source>
        <tissue>Brain</tissue>
        <tissue>Cajal-Retzius cell</tissue>
        <tissue>Fetal brain cortex</tissue>
    </source>
</reference>
<reference key="6">
    <citation type="journal article" date="1997" name="Electrophoresis">
        <title>Two-dimensional electrophoretic analysis of human breast carcinoma proteins: mapping of proteins that bind to the SH3 domain of mixed lineage kinase MLK2.</title>
        <authorList>
            <person name="Rasmussen R.K."/>
            <person name="Ji H."/>
            <person name="Eddes J.S."/>
            <person name="Moritz R.L."/>
            <person name="Reid G.E."/>
            <person name="Simpson R.J."/>
            <person name="Dorow D.S."/>
        </authorList>
    </citation>
    <scope>PROTEIN SEQUENCE OF 91-100</scope>
    <source>
        <tissue>Mammary carcinoma</tissue>
    </source>
</reference>
<reference key="7">
    <citation type="journal article" date="2008" name="Proc. Natl. Acad. Sci. U.S.A.">
        <title>A quantitative atlas of mitotic phosphorylation.</title>
        <authorList>
            <person name="Dephoure N."/>
            <person name="Zhou C."/>
            <person name="Villen J."/>
            <person name="Beausoleil S.A."/>
            <person name="Bakalarski C.E."/>
            <person name="Elledge S.J."/>
            <person name="Gygi S.P."/>
        </authorList>
    </citation>
    <scope>PHOSPHORYLATION [LARGE SCALE ANALYSIS] AT SER-31</scope>
    <scope>IDENTIFICATION BY MASS SPECTROMETRY [LARGE SCALE ANALYSIS]</scope>
    <source>
        <tissue>Cervix carcinoma</tissue>
    </source>
</reference>
<reference key="8">
    <citation type="journal article" date="2009" name="Sci. Signal.">
        <title>Quantitative phosphoproteomic analysis of T cell receptor signaling reveals system-wide modulation of protein-protein interactions.</title>
        <authorList>
            <person name="Mayya V."/>
            <person name="Lundgren D.H."/>
            <person name="Hwang S.-I."/>
            <person name="Rezaul K."/>
            <person name="Wu L."/>
            <person name="Eng J.K."/>
            <person name="Rodionov V."/>
            <person name="Han D.K."/>
        </authorList>
    </citation>
    <scope>PHOSPHORYLATION [LARGE SCALE ANALYSIS] AT SER-14</scope>
    <scope>IDENTIFICATION BY MASS SPECTROMETRY [LARGE SCALE ANALYSIS]</scope>
    <source>
        <tissue>Leukemic T-cell</tissue>
    </source>
</reference>
<reference key="9">
    <citation type="journal article" date="2010" name="Sci. Signal.">
        <title>Quantitative phosphoproteomics reveals widespread full phosphorylation site occupancy during mitosis.</title>
        <authorList>
            <person name="Olsen J.V."/>
            <person name="Vermeulen M."/>
            <person name="Santamaria A."/>
            <person name="Kumar C."/>
            <person name="Miller M.L."/>
            <person name="Jensen L.J."/>
            <person name="Gnad F."/>
            <person name="Cox J."/>
            <person name="Jensen T.S."/>
            <person name="Nigg E.A."/>
            <person name="Brunak S."/>
            <person name="Mann M."/>
        </authorList>
    </citation>
    <scope>PHOSPHORYLATION [LARGE SCALE ANALYSIS] AT SER-14</scope>
    <scope>IDENTIFICATION BY MASS SPECTROMETRY [LARGE SCALE ANALYSIS]</scope>
    <source>
        <tissue>Cervix carcinoma</tissue>
    </source>
</reference>
<reference key="10">
    <citation type="journal article" date="2011" name="BMC Syst. Biol.">
        <title>Initial characterization of the human central proteome.</title>
        <authorList>
            <person name="Burkard T.R."/>
            <person name="Planyavsky M."/>
            <person name="Kaupe I."/>
            <person name="Breitwieser F.P."/>
            <person name="Buerckstuemmer T."/>
            <person name="Bennett K.L."/>
            <person name="Superti-Furga G."/>
            <person name="Colinge J."/>
        </authorList>
    </citation>
    <scope>IDENTIFICATION BY MASS SPECTROMETRY [LARGE SCALE ANALYSIS]</scope>
</reference>
<reference key="11">
    <citation type="journal article" date="2011" name="Sci. Signal.">
        <title>System-wide temporal characterization of the proteome and phosphoproteome of human embryonic stem cell differentiation.</title>
        <authorList>
            <person name="Rigbolt K.T."/>
            <person name="Prokhorova T.A."/>
            <person name="Akimov V."/>
            <person name="Henningsen J."/>
            <person name="Johansen P.T."/>
            <person name="Kratchmarova I."/>
            <person name="Kassem M."/>
            <person name="Mann M."/>
            <person name="Olsen J.V."/>
            <person name="Blagoev B."/>
        </authorList>
    </citation>
    <scope>PHOSPHORYLATION [LARGE SCALE ANALYSIS] AT SER-14</scope>
    <scope>IDENTIFICATION BY MASS SPECTROMETRY [LARGE SCALE ANALYSIS]</scope>
</reference>
<reference key="12">
    <citation type="journal article" date="2012" name="J. Biol. Chem.">
        <title>Regulation of glycolytic enzyme phosphoglycerate mutase-1 by Sirt1 protein-mediated deacetylation.</title>
        <authorList>
            <person name="Hallows W.C."/>
            <person name="Yu W."/>
            <person name="Denu J.M."/>
        </authorList>
    </citation>
    <scope>ACETYLATION AT LYS-251; LYS-253 AND LYS-254</scope>
    <scope>DEACETYLATION BY SIRT1</scope>
</reference>
<reference key="13">
    <citation type="journal article" date="2013" name="J. Proteome Res.">
        <title>Toward a comprehensive characterization of a human cancer cell phosphoproteome.</title>
        <authorList>
            <person name="Zhou H."/>
            <person name="Di Palma S."/>
            <person name="Preisinger C."/>
            <person name="Peng M."/>
            <person name="Polat A.N."/>
            <person name="Heck A.J."/>
            <person name="Mohammed S."/>
        </authorList>
    </citation>
    <scope>PHOSPHORYLATION [LARGE SCALE ANALYSIS] AT SER-14 AND SER-31</scope>
    <scope>IDENTIFICATION BY MASS SPECTROMETRY [LARGE SCALE ANALYSIS]</scope>
    <source>
        <tissue>Cervix carcinoma</tissue>
        <tissue>Erythroleukemia</tissue>
    </source>
</reference>
<reference key="14">
    <citation type="journal article" date="2014" name="J. Proteomics">
        <title>An enzyme assisted RP-RPLC approach for in-depth analysis of human liver phosphoproteome.</title>
        <authorList>
            <person name="Bian Y."/>
            <person name="Song C."/>
            <person name="Cheng K."/>
            <person name="Dong M."/>
            <person name="Wang F."/>
            <person name="Huang J."/>
            <person name="Sun D."/>
            <person name="Wang L."/>
            <person name="Ye M."/>
            <person name="Zou H."/>
        </authorList>
    </citation>
    <scope>PHOSPHORYLATION [LARGE SCALE ANALYSIS] AT SER-14 AND SER-23</scope>
    <scope>IDENTIFICATION BY MASS SPECTROMETRY [LARGE SCALE ANALYSIS]</scope>
    <source>
        <tissue>Liver</tissue>
    </source>
</reference>
<reference key="15">
    <citation type="journal article" date="2015" name="Proteomics">
        <title>N-terminome analysis of the human mitochondrial proteome.</title>
        <authorList>
            <person name="Vaca Jacome A.S."/>
            <person name="Rabilloud T."/>
            <person name="Schaeffer-Reiss C."/>
            <person name="Rompais M."/>
            <person name="Ayoub D."/>
            <person name="Lane L."/>
            <person name="Bairoch A."/>
            <person name="Van Dorsselaer A."/>
            <person name="Carapito C."/>
        </authorList>
    </citation>
    <scope>IDENTIFICATION BY MASS SPECTROMETRY [LARGE SCALE ANALYSIS]</scope>
</reference>
<reference key="16">
    <citation type="journal article" date="2005" name="Biochem. Biophys. Res. Commun.">
        <title>Crystal structure of human B-type phosphoglycerate mutase bound with citrate.</title>
        <authorList>
            <person name="Wang Y."/>
            <person name="Wei Z."/>
            <person name="Liu L."/>
            <person name="Cheng Z."/>
            <person name="Lin Y."/>
            <person name="Ji F."/>
            <person name="Gong W."/>
        </authorList>
    </citation>
    <scope>X-RAY CRYSTALLOGRAPHY (2.7 ANGSTROMS) IN COMPLEX WITH CITRATE</scope>
    <scope>SUBUNIT</scope>
    <scope>ACTIVE SITE</scope>
</reference>
<reference key="17">
    <citation type="journal article" date="2013" name="Nat. Commun.">
        <title>Tyr26 phosphorylation of PGAM1 provides a metabolic advantage to tumours by stabilizing the active conformation.</title>
        <authorList>
            <person name="Hitosugi T."/>
            <person name="Zhou L."/>
            <person name="Fan J."/>
            <person name="Elf S."/>
            <person name="Zhang L."/>
            <person name="Xie J."/>
            <person name="Wang Y."/>
            <person name="Gu T.L."/>
            <person name="Aleckovic M."/>
            <person name="LeRoy G."/>
            <person name="Kang Y."/>
            <person name="Kang H.B."/>
            <person name="Seo J.H."/>
            <person name="Shan C."/>
            <person name="Jin P."/>
            <person name="Gong W."/>
            <person name="Lonial S."/>
            <person name="Arellano M.L."/>
            <person name="Khoury H.J."/>
            <person name="Chen G.Z."/>
            <person name="Shin D.M."/>
            <person name="Khuri F.R."/>
            <person name="Boggon T.J."/>
            <person name="Kang S."/>
            <person name="He C."/>
            <person name="Chen J."/>
        </authorList>
    </citation>
    <scope>X-RAY CRYSTALLOGRAPHY (1.65 ANGSTROMS) OF 1-254 IN COMPLEX WITH SUBSTRATE ANALOG</scope>
    <scope>PHOSPHORYLATION AT TYR-26</scope>
    <scope>ACTIVE SITE</scope>
    <scope>FUNCTION</scope>
    <scope>CATALYTIC ACTIVITY</scope>
</reference>
<comment type="function">
    <text evidence="6">Catalyzes the interconversion of 2-phosphoglycerate and 3-phosphoglyceratea crucial step in glycolysis, by using 2,3-bisphosphoglycerate (PubMed:23653202). Also catalyzes the interconversion of (2R)-2,3-bisphosphoglycerate and (2R)-3-phospho-glyceroyl phosphate (PubMed:23653202).</text>
</comment>
<comment type="catalytic activity">
    <reaction evidence="6">
        <text>(2R)-2-phosphoglycerate = (2R)-3-phosphoglycerate</text>
        <dbReference type="Rhea" id="RHEA:15901"/>
        <dbReference type="ChEBI" id="CHEBI:58272"/>
        <dbReference type="ChEBI" id="CHEBI:58289"/>
        <dbReference type="EC" id="5.4.2.11"/>
    </reaction>
    <physiologicalReaction direction="right-to-left" evidence="11">
        <dbReference type="Rhea" id="RHEA:15903"/>
    </physiologicalReaction>
</comment>
<comment type="catalytic activity">
    <reaction evidence="6">
        <text>(2R)-3-phospho-glyceroyl phosphate = (2R)-2,3-bisphosphoglycerate + H(+)</text>
        <dbReference type="Rhea" id="RHEA:17765"/>
        <dbReference type="ChEBI" id="CHEBI:15378"/>
        <dbReference type="ChEBI" id="CHEBI:57604"/>
        <dbReference type="ChEBI" id="CHEBI:58248"/>
        <dbReference type="EC" id="5.4.2.4"/>
    </reaction>
</comment>
<comment type="subunit">
    <text evidence="4">Homodimer.</text>
</comment>
<comment type="interaction">
    <interactant intactId="EBI-717905">
        <id>P18669</id>
    </interactant>
    <interactant intactId="EBI-77613">
        <id>P05067</id>
        <label>APP</label>
    </interactant>
    <organismsDiffer>false</organismsDiffer>
    <experiments>4</experiments>
</comment>
<comment type="interaction">
    <interactant intactId="EBI-717905">
        <id>P18669</id>
    </interactant>
    <interactant intactId="EBI-358311">
        <id>P12004</id>
        <label>PCNA</label>
    </interactant>
    <organismsDiffer>false</organismsDiffer>
    <experiments>2</experiments>
</comment>
<comment type="interaction">
    <interactant intactId="EBI-717905">
        <id>P18669</id>
    </interactant>
    <interactant intactId="EBI-12238241">
        <id>Q8IV45</id>
        <label>UNC5CL</label>
    </interactant>
    <organismsDiffer>false</organismsDiffer>
    <experiments>3</experiments>
</comment>
<comment type="tissue specificity">
    <text evidence="7">Expressed in the liver and brain. Not found in the muscle.</text>
</comment>
<comment type="PTM">
    <text evidence="5">Acetylated at Lys-253, Lys-253 and Lys-254 under high glucose condition. Acetylation increases catalytic activity. Under glucose restriction SIRT1 levels dramatically increase and it deacetylates the enzyme.</text>
</comment>
<comment type="similarity">
    <text evidence="9">Belongs to the phosphoglycerate mutase family. BPG-dependent PGAM subfamily.</text>
</comment>
<protein>
    <recommendedName>
        <fullName evidence="9">Phosphoglycerate mutase 1</fullName>
        <ecNumber evidence="6">5.4.2.11</ecNumber>
        <ecNumber evidence="6">5.4.2.4</ecNumber>
    </recommendedName>
    <alternativeName>
        <fullName>BPG-dependent PGAM 1</fullName>
    </alternativeName>
    <alternativeName>
        <fullName>Phosphoglycerate mutase isozyme B</fullName>
        <shortName>PGAM-B</shortName>
    </alternativeName>
</protein>
<sequence length="254" mass="28804">MAAYKLVLIRHGESAWNLENRFSGWYDADLSPAGHEEAKRGGQALRDAGYEFDICFTSVQKRAIRTLWTVLDAIDQMWLPVVRTWRLNERHYGGLTGLNKAETAAKHGEAQVKIWRRSYDVPPPPMEPDHPFYSNISKDRRYADLTEDQLPSCESLKDTIARALPFWNEEIVPQIKEGKRVLIAAHGNSLRGIVKHLEGLSEEAIMELNLPTGIPIVYELDKNLKPIKPMQFLGDEETVRKAMEAVAAQGKAKK</sequence>
<gene>
    <name evidence="12" type="primary">PGAM1</name>
    <name type="synonym">PGAMA</name>
    <name type="ORF">CDABP0006</name>
</gene>
<evidence type="ECO:0000250" key="1">
    <source>
        <dbReference type="UniProtKB" id="P00950"/>
    </source>
</evidence>
<evidence type="ECO:0000250" key="2">
    <source>
        <dbReference type="UniProtKB" id="Q3JWH7"/>
    </source>
</evidence>
<evidence type="ECO:0000250" key="3">
    <source>
        <dbReference type="UniProtKB" id="Q9DBJ1"/>
    </source>
</evidence>
<evidence type="ECO:0000269" key="4">
    <source>
    </source>
</evidence>
<evidence type="ECO:0000269" key="5">
    <source>
    </source>
</evidence>
<evidence type="ECO:0000269" key="6">
    <source>
    </source>
</evidence>
<evidence type="ECO:0000269" key="7">
    <source>
    </source>
</evidence>
<evidence type="ECO:0000269" key="8">
    <source>
    </source>
</evidence>
<evidence type="ECO:0000305" key="9"/>
<evidence type="ECO:0000305" key="10">
    <source>
    </source>
</evidence>
<evidence type="ECO:0000305" key="11">
    <source>
    </source>
</evidence>
<evidence type="ECO:0000312" key="12">
    <source>
        <dbReference type="HGNC" id="HGNC:8888"/>
    </source>
</evidence>
<evidence type="ECO:0007744" key="13">
    <source>
    </source>
</evidence>
<evidence type="ECO:0007744" key="14">
    <source>
    </source>
</evidence>
<evidence type="ECO:0007744" key="15">
    <source>
    </source>
</evidence>
<evidence type="ECO:0007744" key="16">
    <source>
    </source>
</evidence>
<evidence type="ECO:0007744" key="17">
    <source>
    </source>
</evidence>
<evidence type="ECO:0007744" key="18">
    <source>
    </source>
</evidence>
<evidence type="ECO:0007829" key="19">
    <source>
        <dbReference type="PDB" id="7XB8"/>
    </source>
</evidence>
<evidence type="ECO:0007829" key="20">
    <source>
        <dbReference type="PDB" id="7XB9"/>
    </source>
</evidence>
<accession>P18669</accession>
<accession>Q9BWC0</accession>
<keyword id="KW-0002">3D-structure</keyword>
<keyword id="KW-0007">Acetylation</keyword>
<keyword id="KW-0903">Direct protein sequencing</keyword>
<keyword id="KW-0324">Glycolysis</keyword>
<keyword id="KW-0378">Hydrolase</keyword>
<keyword id="KW-0413">Isomerase</keyword>
<keyword id="KW-0597">Phosphoprotein</keyword>
<keyword id="KW-1267">Proteomics identification</keyword>
<keyword id="KW-1185">Reference proteome</keyword>
<name>PGAM1_HUMAN</name>